<evidence type="ECO:0000255" key="1">
    <source>
        <dbReference type="HAMAP-Rule" id="MF_00082"/>
    </source>
</evidence>
<organism>
    <name type="scientific">Deinococcus radiodurans (strain ATCC 13939 / DSM 20539 / JCM 16871 / CCUG 27074 / LMG 4051 / NBRC 15346 / NCIMB 9279 / VKM B-1422 / R1)</name>
    <dbReference type="NCBI Taxonomy" id="243230"/>
    <lineage>
        <taxon>Bacteria</taxon>
        <taxon>Thermotogati</taxon>
        <taxon>Deinococcota</taxon>
        <taxon>Deinococci</taxon>
        <taxon>Deinococcales</taxon>
        <taxon>Deinococcaceae</taxon>
        <taxon>Deinococcus</taxon>
    </lineage>
</organism>
<keyword id="KW-0028">Amino-acid biosynthesis</keyword>
<keyword id="KW-0055">Arginine biosynthesis</keyword>
<keyword id="KW-0067">ATP-binding</keyword>
<keyword id="KW-0963">Cytoplasm</keyword>
<keyword id="KW-0418">Kinase</keyword>
<keyword id="KW-0547">Nucleotide-binding</keyword>
<keyword id="KW-1185">Reference proteome</keyword>
<keyword id="KW-0808">Transferase</keyword>
<accession>Q9RRP6</accession>
<reference key="1">
    <citation type="journal article" date="1999" name="Science">
        <title>Genome sequence of the radioresistant bacterium Deinococcus radiodurans R1.</title>
        <authorList>
            <person name="White O."/>
            <person name="Eisen J.A."/>
            <person name="Heidelberg J.F."/>
            <person name="Hickey E.K."/>
            <person name="Peterson J.D."/>
            <person name="Dodson R.J."/>
            <person name="Haft D.H."/>
            <person name="Gwinn M.L."/>
            <person name="Nelson W.C."/>
            <person name="Richardson D.L."/>
            <person name="Moffat K.S."/>
            <person name="Qin H."/>
            <person name="Jiang L."/>
            <person name="Pamphile W."/>
            <person name="Crosby M."/>
            <person name="Shen M."/>
            <person name="Vamathevan J.J."/>
            <person name="Lam P."/>
            <person name="McDonald L.A."/>
            <person name="Utterback T.R."/>
            <person name="Zalewski C."/>
            <person name="Makarova K.S."/>
            <person name="Aravind L."/>
            <person name="Daly M.J."/>
            <person name="Minton K.W."/>
            <person name="Fleischmann R.D."/>
            <person name="Ketchum K.A."/>
            <person name="Nelson K.E."/>
            <person name="Salzberg S.L."/>
            <person name="Smith H.O."/>
            <person name="Venter J.C."/>
            <person name="Fraser C.M."/>
        </authorList>
    </citation>
    <scope>NUCLEOTIDE SEQUENCE [LARGE SCALE GENOMIC DNA]</scope>
    <source>
        <strain>ATCC 13939 / DSM 20539 / JCM 16871 / CCUG 27074 / LMG 4051 / NBRC 15346 / NCIMB 9279 / VKM B-1422 / R1</strain>
    </source>
</reference>
<dbReference type="EC" id="2.7.2.8" evidence="1"/>
<dbReference type="EMBL" id="AE000513">
    <property type="protein sequence ID" value="AAF11985.1"/>
    <property type="molecule type" value="Genomic_DNA"/>
</dbReference>
<dbReference type="PIR" id="F75272">
    <property type="entry name" value="F75272"/>
</dbReference>
<dbReference type="RefSeq" id="NP_296162.1">
    <property type="nucleotide sequence ID" value="NC_001263.1"/>
</dbReference>
<dbReference type="RefSeq" id="WP_010889067.1">
    <property type="nucleotide sequence ID" value="NC_001263.1"/>
</dbReference>
<dbReference type="SMR" id="Q9RRP6"/>
<dbReference type="FunCoup" id="Q9RRP6">
    <property type="interactions" value="428"/>
</dbReference>
<dbReference type="STRING" id="243230.DR_2442"/>
<dbReference type="PaxDb" id="243230-DR_2442"/>
<dbReference type="EnsemblBacteria" id="AAF11985">
    <property type="protein sequence ID" value="AAF11985"/>
    <property type="gene ID" value="DR_2442"/>
</dbReference>
<dbReference type="GeneID" id="69518696"/>
<dbReference type="KEGG" id="dra:DR_2442"/>
<dbReference type="PATRIC" id="fig|243230.17.peg.2678"/>
<dbReference type="eggNOG" id="COG0548">
    <property type="taxonomic scope" value="Bacteria"/>
</dbReference>
<dbReference type="HOGENOM" id="CLU_053680_1_0_0"/>
<dbReference type="InParanoid" id="Q9RRP6"/>
<dbReference type="OrthoDB" id="9803155at2"/>
<dbReference type="UniPathway" id="UPA00068">
    <property type="reaction ID" value="UER00107"/>
</dbReference>
<dbReference type="Proteomes" id="UP000002524">
    <property type="component" value="Chromosome 1"/>
</dbReference>
<dbReference type="GO" id="GO:0005737">
    <property type="term" value="C:cytoplasm"/>
    <property type="evidence" value="ECO:0007669"/>
    <property type="project" value="UniProtKB-SubCell"/>
</dbReference>
<dbReference type="GO" id="GO:0003991">
    <property type="term" value="F:acetylglutamate kinase activity"/>
    <property type="evidence" value="ECO:0000318"/>
    <property type="project" value="GO_Central"/>
</dbReference>
<dbReference type="GO" id="GO:0005524">
    <property type="term" value="F:ATP binding"/>
    <property type="evidence" value="ECO:0007669"/>
    <property type="project" value="UniProtKB-UniRule"/>
</dbReference>
<dbReference type="GO" id="GO:0042450">
    <property type="term" value="P:arginine biosynthetic process via ornithine"/>
    <property type="evidence" value="ECO:0007669"/>
    <property type="project" value="UniProtKB-UniRule"/>
</dbReference>
<dbReference type="GO" id="GO:0006526">
    <property type="term" value="P:L-arginine biosynthetic process"/>
    <property type="evidence" value="ECO:0000318"/>
    <property type="project" value="GO_Central"/>
</dbReference>
<dbReference type="CDD" id="cd04238">
    <property type="entry name" value="AAK_NAGK-like"/>
    <property type="match status" value="1"/>
</dbReference>
<dbReference type="FunFam" id="3.40.1160.10:FF:000004">
    <property type="entry name" value="Acetylglutamate kinase"/>
    <property type="match status" value="1"/>
</dbReference>
<dbReference type="Gene3D" id="3.40.1160.10">
    <property type="entry name" value="Acetylglutamate kinase-like"/>
    <property type="match status" value="1"/>
</dbReference>
<dbReference type="HAMAP" id="MF_00082">
    <property type="entry name" value="ArgB"/>
    <property type="match status" value="1"/>
</dbReference>
<dbReference type="InterPro" id="IPR036393">
    <property type="entry name" value="AceGlu_kinase-like_sf"/>
</dbReference>
<dbReference type="InterPro" id="IPR004662">
    <property type="entry name" value="AcgluKinase_fam"/>
</dbReference>
<dbReference type="InterPro" id="IPR037528">
    <property type="entry name" value="ArgB"/>
</dbReference>
<dbReference type="InterPro" id="IPR001048">
    <property type="entry name" value="Asp/Glu/Uridylate_kinase"/>
</dbReference>
<dbReference type="NCBIfam" id="TIGR00761">
    <property type="entry name" value="argB"/>
    <property type="match status" value="1"/>
</dbReference>
<dbReference type="PANTHER" id="PTHR23342">
    <property type="entry name" value="N-ACETYLGLUTAMATE SYNTHASE"/>
    <property type="match status" value="1"/>
</dbReference>
<dbReference type="PANTHER" id="PTHR23342:SF0">
    <property type="entry name" value="N-ACETYLGLUTAMATE SYNTHASE, MITOCHONDRIAL"/>
    <property type="match status" value="1"/>
</dbReference>
<dbReference type="Pfam" id="PF00696">
    <property type="entry name" value="AA_kinase"/>
    <property type="match status" value="1"/>
</dbReference>
<dbReference type="PIRSF" id="PIRSF000728">
    <property type="entry name" value="NAGK"/>
    <property type="match status" value="1"/>
</dbReference>
<dbReference type="SUPFAM" id="SSF53633">
    <property type="entry name" value="Carbamate kinase-like"/>
    <property type="match status" value="1"/>
</dbReference>
<feature type="chain" id="PRO_0000112611" description="Acetylglutamate kinase">
    <location>
        <begin position="1"/>
        <end position="249"/>
    </location>
</feature>
<feature type="binding site" evidence="1">
    <location>
        <begin position="38"/>
        <end position="39"/>
    </location>
    <ligand>
        <name>substrate</name>
    </ligand>
</feature>
<feature type="binding site" evidence="1">
    <location>
        <position position="60"/>
    </location>
    <ligand>
        <name>substrate</name>
    </ligand>
</feature>
<feature type="binding site" evidence="1">
    <location>
        <position position="147"/>
    </location>
    <ligand>
        <name>substrate</name>
    </ligand>
</feature>
<feature type="site" description="Transition state stabilizer" evidence="1">
    <location>
        <position position="4"/>
    </location>
</feature>
<feature type="site" description="Transition state stabilizer" evidence="1">
    <location>
        <position position="209"/>
    </location>
</feature>
<gene>
    <name evidence="1" type="primary">argB</name>
    <name type="ordered locus">DR_2442</name>
</gene>
<name>ARGB_DEIRA</name>
<protein>
    <recommendedName>
        <fullName evidence="1">Acetylglutamate kinase</fullName>
        <ecNumber evidence="1">2.7.2.8</ecNumber>
    </recommendedName>
    <alternativeName>
        <fullName evidence="1">N-acetyl-L-glutamate 5-phosphotransferase</fullName>
    </alternativeName>
    <alternativeName>
        <fullName evidence="1">NAG kinase</fullName>
        <shortName evidence="1">NAGK</shortName>
    </alternativeName>
</protein>
<comment type="function">
    <text evidence="1">Catalyzes the ATP-dependent phosphorylation of N-acetyl-L-glutamate.</text>
</comment>
<comment type="catalytic activity">
    <reaction evidence="1">
        <text>N-acetyl-L-glutamate + ATP = N-acetyl-L-glutamyl 5-phosphate + ADP</text>
        <dbReference type="Rhea" id="RHEA:14629"/>
        <dbReference type="ChEBI" id="CHEBI:30616"/>
        <dbReference type="ChEBI" id="CHEBI:44337"/>
        <dbReference type="ChEBI" id="CHEBI:57936"/>
        <dbReference type="ChEBI" id="CHEBI:456216"/>
        <dbReference type="EC" id="2.7.2.8"/>
    </reaction>
</comment>
<comment type="pathway">
    <text evidence="1">Amino-acid biosynthesis; L-arginine biosynthesis; N(2)-acetyl-L-ornithine from L-glutamate: step 2/4.</text>
</comment>
<comment type="subcellular location">
    <subcellularLocation>
        <location evidence="1">Cytoplasm</location>
    </subcellularLocation>
</comment>
<comment type="similarity">
    <text evidence="1">Belongs to the acetylglutamate kinase family. ArgB subfamily.</text>
</comment>
<proteinExistence type="inferred from homology"/>
<sequence>MIVKYGGNAMKSLDLRRAVARELGTLRGAMPLVVVHGGGPVIERELAARGVASEFIGGLRVTTPEAMDVVEMALCQLNKQLSQDIGQAVGLMGRDDELLRAEVLDPQLGRVGRVTGVNAGLLRTLLGAGLTPVVGCVAVGEDGEALNVNADTVAGAVAGALGEGAVFLTDVDGVYRAYPDPDSRAAQLTRAEVEDGLAAGWIAGGMIPKVRAALDALGRGAPFAIIASGMTAGVLAQAARGEAGTRIVP</sequence>